<protein>
    <recommendedName>
        <fullName evidence="1">Sulfate adenylyltransferase</fullName>
        <ecNumber evidence="1">2.7.7.4</ecNumber>
    </recommendedName>
    <alternativeName>
        <fullName evidence="1">ATP-sulfurylase</fullName>
    </alternativeName>
    <alternativeName>
        <fullName evidence="1">Sulfate adenylate transferase</fullName>
        <shortName evidence="1">SAT</shortName>
    </alternativeName>
</protein>
<feature type="chain" id="PRO_1000009042" description="Sulfate adenylyltransferase">
    <location>
        <begin position="1"/>
        <end position="395"/>
    </location>
</feature>
<gene>
    <name evidence="1" type="primary">sat</name>
    <name type="ordered locus">OB1659</name>
</gene>
<accession>Q8EQN5</accession>
<reference key="1">
    <citation type="journal article" date="2002" name="Nucleic Acids Res.">
        <title>Genome sequence of Oceanobacillus iheyensis isolated from the Iheya Ridge and its unexpected adaptive capabilities to extreme environments.</title>
        <authorList>
            <person name="Takami H."/>
            <person name="Takaki Y."/>
            <person name="Uchiyama I."/>
        </authorList>
    </citation>
    <scope>NUCLEOTIDE SEQUENCE [LARGE SCALE GENOMIC DNA]</scope>
    <source>
        <strain>DSM 14371 / CIP 107618 / JCM 11309 / KCTC 3954 / HTE831</strain>
    </source>
</reference>
<comment type="catalytic activity">
    <reaction evidence="1">
        <text>sulfate + ATP + H(+) = adenosine 5'-phosphosulfate + diphosphate</text>
        <dbReference type="Rhea" id="RHEA:18133"/>
        <dbReference type="ChEBI" id="CHEBI:15378"/>
        <dbReference type="ChEBI" id="CHEBI:16189"/>
        <dbReference type="ChEBI" id="CHEBI:30616"/>
        <dbReference type="ChEBI" id="CHEBI:33019"/>
        <dbReference type="ChEBI" id="CHEBI:58243"/>
        <dbReference type="EC" id="2.7.7.4"/>
    </reaction>
</comment>
<comment type="pathway">
    <text evidence="1">Sulfur metabolism; hydrogen sulfide biosynthesis; sulfite from sulfate: step 1/3.</text>
</comment>
<comment type="similarity">
    <text evidence="1">Belongs to the sulfate adenylyltransferase family.</text>
</comment>
<dbReference type="EC" id="2.7.7.4" evidence="1"/>
<dbReference type="EMBL" id="BA000028">
    <property type="protein sequence ID" value="BAC13615.1"/>
    <property type="molecule type" value="Genomic_DNA"/>
</dbReference>
<dbReference type="RefSeq" id="WP_011066060.1">
    <property type="nucleotide sequence ID" value="NC_004193.1"/>
</dbReference>
<dbReference type="SMR" id="Q8EQN5"/>
<dbReference type="STRING" id="221109.gene:10733899"/>
<dbReference type="KEGG" id="oih:OB1659"/>
<dbReference type="eggNOG" id="COG2046">
    <property type="taxonomic scope" value="Bacteria"/>
</dbReference>
<dbReference type="HOGENOM" id="CLU_022950_1_1_9"/>
<dbReference type="OrthoDB" id="9804504at2"/>
<dbReference type="PhylomeDB" id="Q8EQN5"/>
<dbReference type="UniPathway" id="UPA00140">
    <property type="reaction ID" value="UER00204"/>
</dbReference>
<dbReference type="Proteomes" id="UP000000822">
    <property type="component" value="Chromosome"/>
</dbReference>
<dbReference type="GO" id="GO:0005524">
    <property type="term" value="F:ATP binding"/>
    <property type="evidence" value="ECO:0007669"/>
    <property type="project" value="UniProtKB-KW"/>
</dbReference>
<dbReference type="GO" id="GO:0004781">
    <property type="term" value="F:sulfate adenylyltransferase (ATP) activity"/>
    <property type="evidence" value="ECO:0007669"/>
    <property type="project" value="UniProtKB-UniRule"/>
</dbReference>
<dbReference type="GO" id="GO:0070814">
    <property type="term" value="P:hydrogen sulfide biosynthetic process"/>
    <property type="evidence" value="ECO:0007669"/>
    <property type="project" value="UniProtKB-UniRule"/>
</dbReference>
<dbReference type="GO" id="GO:0000103">
    <property type="term" value="P:sulfate assimilation"/>
    <property type="evidence" value="ECO:0007669"/>
    <property type="project" value="UniProtKB-UniRule"/>
</dbReference>
<dbReference type="CDD" id="cd00517">
    <property type="entry name" value="ATPS"/>
    <property type="match status" value="1"/>
</dbReference>
<dbReference type="Gene3D" id="3.40.50.620">
    <property type="entry name" value="HUPs"/>
    <property type="match status" value="1"/>
</dbReference>
<dbReference type="Gene3D" id="3.10.400.10">
    <property type="entry name" value="Sulfate adenylyltransferase"/>
    <property type="match status" value="1"/>
</dbReference>
<dbReference type="HAMAP" id="MF_00066">
    <property type="entry name" value="Sulf_adenylyltr"/>
    <property type="match status" value="1"/>
</dbReference>
<dbReference type="InterPro" id="IPR025980">
    <property type="entry name" value="ATP-Sase_PUA-like_dom"/>
</dbReference>
<dbReference type="InterPro" id="IPR015947">
    <property type="entry name" value="PUA-like_sf"/>
</dbReference>
<dbReference type="InterPro" id="IPR014729">
    <property type="entry name" value="Rossmann-like_a/b/a_fold"/>
</dbReference>
<dbReference type="InterPro" id="IPR020792">
    <property type="entry name" value="SO4_adenylyltransferase_pro"/>
</dbReference>
<dbReference type="InterPro" id="IPR024951">
    <property type="entry name" value="Sulfurylase_cat_dom"/>
</dbReference>
<dbReference type="InterPro" id="IPR002650">
    <property type="entry name" value="Sulphate_adenylyltransferase"/>
</dbReference>
<dbReference type="NCBIfam" id="NF003166">
    <property type="entry name" value="PRK04149.1"/>
    <property type="match status" value="1"/>
</dbReference>
<dbReference type="NCBIfam" id="TIGR00339">
    <property type="entry name" value="sopT"/>
    <property type="match status" value="1"/>
</dbReference>
<dbReference type="PANTHER" id="PTHR43509">
    <property type="match status" value="1"/>
</dbReference>
<dbReference type="PANTHER" id="PTHR43509:SF1">
    <property type="entry name" value="SULFATE ADENYLYLTRANSFERASE"/>
    <property type="match status" value="1"/>
</dbReference>
<dbReference type="Pfam" id="PF01747">
    <property type="entry name" value="ATP-sulfurylase"/>
    <property type="match status" value="1"/>
</dbReference>
<dbReference type="Pfam" id="PF14306">
    <property type="entry name" value="PUA_2"/>
    <property type="match status" value="1"/>
</dbReference>
<dbReference type="SUPFAM" id="SSF52374">
    <property type="entry name" value="Nucleotidylyl transferase"/>
    <property type="match status" value="1"/>
</dbReference>
<dbReference type="SUPFAM" id="SSF88697">
    <property type="entry name" value="PUA domain-like"/>
    <property type="match status" value="1"/>
</dbReference>
<organism>
    <name type="scientific">Oceanobacillus iheyensis (strain DSM 14371 / CIP 107618 / JCM 11309 / KCTC 3954 / HTE831)</name>
    <dbReference type="NCBI Taxonomy" id="221109"/>
    <lineage>
        <taxon>Bacteria</taxon>
        <taxon>Bacillati</taxon>
        <taxon>Bacillota</taxon>
        <taxon>Bacilli</taxon>
        <taxon>Bacillales</taxon>
        <taxon>Bacillaceae</taxon>
        <taxon>Oceanobacillus</taxon>
    </lineage>
</organism>
<sequence>MSSVEMKEQENILPHGGELIDRELTGDRKESYLHKSKSLLALKLDAWSLSDLELIANGGFSPLTGFMGEEDYQSVIENVCLKDGTVWSIPITLAVNKEQADSYDIGTSIALFGEDDILYGVLELEEKYTYEKEKEASLVYGTTDAAHPGVKKLYEKGDVYLAGPIFMLNRPSHDNFEKFYYDPKETRKMFAELGWKTIVGFQTRNPVHRAHEYIQKSALESVDGLLLNPLVGETKSDDISAEIRMESYQVILKNYYPENRARLVIYPAAMRYAGPKEAILHAIVRKNYGCTHFIVGRDHAGVGDYYGTYEAQDLISQYEEKLGIQIFKFEHAFFCTKCENMGTEKTCPHGKEFHVHLSGTKVREKLRNGEQLPKEFSRPEVASVLMKGLSKNNTN</sequence>
<proteinExistence type="inferred from homology"/>
<name>SAT_OCEIH</name>
<evidence type="ECO:0000255" key="1">
    <source>
        <dbReference type="HAMAP-Rule" id="MF_00066"/>
    </source>
</evidence>
<keyword id="KW-0067">ATP-binding</keyword>
<keyword id="KW-0547">Nucleotide-binding</keyword>
<keyword id="KW-0548">Nucleotidyltransferase</keyword>
<keyword id="KW-1185">Reference proteome</keyword>
<keyword id="KW-0808">Transferase</keyword>